<feature type="chain" id="PRO_0000196410" description="DNA replication and repair protein RecF">
    <location>
        <begin position="1"/>
        <end position="398"/>
    </location>
</feature>
<feature type="binding site" evidence="1">
    <location>
        <begin position="30"/>
        <end position="37"/>
    </location>
    <ligand>
        <name>ATP</name>
        <dbReference type="ChEBI" id="CHEBI:30616"/>
    </ligand>
</feature>
<sequence length="398" mass="43591">MYIRSLELRDFRSWPELKVELKPGITIFIGRNGFGKTNIVEAIGYLAHLSSHRVSTDAPLVRANAGDARISAVAVNQGRELAAHLLIKPHAANQGQINRTRVKSPRELLGVIKTVLFAPEDLALVRGEPAERRRYLDDIIATRRPRMAGVKADYDKVLKQRNALLKTATIALRRGYGTEEGAAALATLDTWDGQLARLGAEVMAARFALVQDLSSQIRDAYQTIAPESRPAAVNYKTTIDQGLAQFGEFDAGIIEATLLTELAAKRQREIERGMSLVGPHRDDLELHLGGQPAKGFASHGETWSFALSMRIAEFNLLRSDGTDPILILDDVFSELDAGRREKLVGIARDAEQVIITAAVSDDLPANLADAITARHTVTVRDTDAGRISLLDEQPDTQP</sequence>
<comment type="function">
    <text evidence="1">The RecF protein is involved in DNA metabolism; it is required for DNA replication and normal SOS inducibility. RecF binds preferentially to single-stranded, linear DNA. It also seems to bind ATP.</text>
</comment>
<comment type="subcellular location">
    <subcellularLocation>
        <location evidence="1">Cytoplasm</location>
    </subcellularLocation>
</comment>
<comment type="similarity">
    <text evidence="1">Belongs to the RecF family.</text>
</comment>
<dbReference type="EMBL" id="BA000035">
    <property type="protein sequence ID" value="BAC16814.1"/>
    <property type="molecule type" value="Genomic_DNA"/>
</dbReference>
<dbReference type="RefSeq" id="WP_006768690.1">
    <property type="nucleotide sequence ID" value="NC_004369.1"/>
</dbReference>
<dbReference type="SMR" id="Q8FUL4"/>
<dbReference type="STRING" id="196164.gene:10740391"/>
<dbReference type="KEGG" id="cef:CE0004"/>
<dbReference type="eggNOG" id="COG1195">
    <property type="taxonomic scope" value="Bacteria"/>
</dbReference>
<dbReference type="HOGENOM" id="CLU_040267_1_1_11"/>
<dbReference type="OrthoDB" id="9803889at2"/>
<dbReference type="Proteomes" id="UP000001409">
    <property type="component" value="Chromosome"/>
</dbReference>
<dbReference type="GO" id="GO:0005737">
    <property type="term" value="C:cytoplasm"/>
    <property type="evidence" value="ECO:0007669"/>
    <property type="project" value="UniProtKB-SubCell"/>
</dbReference>
<dbReference type="GO" id="GO:0005524">
    <property type="term" value="F:ATP binding"/>
    <property type="evidence" value="ECO:0007669"/>
    <property type="project" value="UniProtKB-UniRule"/>
</dbReference>
<dbReference type="GO" id="GO:0016887">
    <property type="term" value="F:ATP hydrolysis activity"/>
    <property type="evidence" value="ECO:0007669"/>
    <property type="project" value="InterPro"/>
</dbReference>
<dbReference type="GO" id="GO:0003697">
    <property type="term" value="F:single-stranded DNA binding"/>
    <property type="evidence" value="ECO:0007669"/>
    <property type="project" value="UniProtKB-UniRule"/>
</dbReference>
<dbReference type="GO" id="GO:0006260">
    <property type="term" value="P:DNA replication"/>
    <property type="evidence" value="ECO:0007669"/>
    <property type="project" value="UniProtKB-UniRule"/>
</dbReference>
<dbReference type="GO" id="GO:0000731">
    <property type="term" value="P:DNA synthesis involved in DNA repair"/>
    <property type="evidence" value="ECO:0007669"/>
    <property type="project" value="TreeGrafter"/>
</dbReference>
<dbReference type="GO" id="GO:0006302">
    <property type="term" value="P:double-strand break repair"/>
    <property type="evidence" value="ECO:0007669"/>
    <property type="project" value="TreeGrafter"/>
</dbReference>
<dbReference type="GO" id="GO:0009432">
    <property type="term" value="P:SOS response"/>
    <property type="evidence" value="ECO:0007669"/>
    <property type="project" value="UniProtKB-UniRule"/>
</dbReference>
<dbReference type="CDD" id="cd03242">
    <property type="entry name" value="ABC_RecF"/>
    <property type="match status" value="1"/>
</dbReference>
<dbReference type="Gene3D" id="3.40.50.300">
    <property type="entry name" value="P-loop containing nucleotide triphosphate hydrolases"/>
    <property type="match status" value="1"/>
</dbReference>
<dbReference type="Gene3D" id="1.20.1050.90">
    <property type="entry name" value="RecF/RecN/SMC, N-terminal domain"/>
    <property type="match status" value="1"/>
</dbReference>
<dbReference type="HAMAP" id="MF_00365">
    <property type="entry name" value="RecF"/>
    <property type="match status" value="1"/>
</dbReference>
<dbReference type="InterPro" id="IPR003593">
    <property type="entry name" value="AAA+_ATPase"/>
</dbReference>
<dbReference type="InterPro" id="IPR001238">
    <property type="entry name" value="DNA-binding_RecF"/>
</dbReference>
<dbReference type="InterPro" id="IPR018078">
    <property type="entry name" value="DNA-binding_RecF_CS"/>
</dbReference>
<dbReference type="InterPro" id="IPR027417">
    <property type="entry name" value="P-loop_NTPase"/>
</dbReference>
<dbReference type="InterPro" id="IPR003395">
    <property type="entry name" value="RecF/RecN/SMC_N"/>
</dbReference>
<dbReference type="InterPro" id="IPR042174">
    <property type="entry name" value="RecF_2"/>
</dbReference>
<dbReference type="NCBIfam" id="TIGR00611">
    <property type="entry name" value="recf"/>
    <property type="match status" value="1"/>
</dbReference>
<dbReference type="PANTHER" id="PTHR32182">
    <property type="entry name" value="DNA REPLICATION AND REPAIR PROTEIN RECF"/>
    <property type="match status" value="1"/>
</dbReference>
<dbReference type="PANTHER" id="PTHR32182:SF0">
    <property type="entry name" value="DNA REPLICATION AND REPAIR PROTEIN RECF"/>
    <property type="match status" value="1"/>
</dbReference>
<dbReference type="Pfam" id="PF02463">
    <property type="entry name" value="SMC_N"/>
    <property type="match status" value="1"/>
</dbReference>
<dbReference type="SMART" id="SM00382">
    <property type="entry name" value="AAA"/>
    <property type="match status" value="1"/>
</dbReference>
<dbReference type="SUPFAM" id="SSF52540">
    <property type="entry name" value="P-loop containing nucleoside triphosphate hydrolases"/>
    <property type="match status" value="1"/>
</dbReference>
<dbReference type="PROSITE" id="PS00617">
    <property type="entry name" value="RECF_1"/>
    <property type="match status" value="1"/>
</dbReference>
<dbReference type="PROSITE" id="PS00618">
    <property type="entry name" value="RECF_2"/>
    <property type="match status" value="1"/>
</dbReference>
<proteinExistence type="inferred from homology"/>
<protein>
    <recommendedName>
        <fullName evidence="1">DNA replication and repair protein RecF</fullName>
    </recommendedName>
</protein>
<gene>
    <name evidence="1" type="primary">recF</name>
    <name type="ordered locus">CE0004</name>
</gene>
<reference key="1">
    <citation type="journal article" date="2003" name="Genome Res.">
        <title>Comparative complete genome sequence analysis of the amino acid replacements responsible for the thermostability of Corynebacterium efficiens.</title>
        <authorList>
            <person name="Nishio Y."/>
            <person name="Nakamura Y."/>
            <person name="Kawarabayasi Y."/>
            <person name="Usuda Y."/>
            <person name="Kimura E."/>
            <person name="Sugimoto S."/>
            <person name="Matsui K."/>
            <person name="Yamagishi A."/>
            <person name="Kikuchi H."/>
            <person name="Ikeo K."/>
            <person name="Gojobori T."/>
        </authorList>
    </citation>
    <scope>NUCLEOTIDE SEQUENCE [LARGE SCALE GENOMIC DNA]</scope>
    <source>
        <strain>DSM 44549 / YS-314 / AJ 12310 / JCM 11189 / NBRC 100395</strain>
    </source>
</reference>
<evidence type="ECO:0000255" key="1">
    <source>
        <dbReference type="HAMAP-Rule" id="MF_00365"/>
    </source>
</evidence>
<keyword id="KW-0067">ATP-binding</keyword>
<keyword id="KW-0963">Cytoplasm</keyword>
<keyword id="KW-0227">DNA damage</keyword>
<keyword id="KW-0234">DNA repair</keyword>
<keyword id="KW-0235">DNA replication</keyword>
<keyword id="KW-0238">DNA-binding</keyword>
<keyword id="KW-0547">Nucleotide-binding</keyword>
<keyword id="KW-1185">Reference proteome</keyword>
<keyword id="KW-0742">SOS response</keyword>
<organism>
    <name type="scientific">Corynebacterium efficiens (strain DSM 44549 / YS-314 / AJ 12310 / JCM 11189 / NBRC 100395)</name>
    <dbReference type="NCBI Taxonomy" id="196164"/>
    <lineage>
        <taxon>Bacteria</taxon>
        <taxon>Bacillati</taxon>
        <taxon>Actinomycetota</taxon>
        <taxon>Actinomycetes</taxon>
        <taxon>Mycobacteriales</taxon>
        <taxon>Corynebacteriaceae</taxon>
        <taxon>Corynebacterium</taxon>
    </lineage>
</organism>
<accession>Q8FUL4</accession>
<name>RECF_COREF</name>